<name>ECOT_SHIB3</name>
<accession>B2TV26</accession>
<organism>
    <name type="scientific">Shigella boydii serotype 18 (strain CDC 3083-94 / BS512)</name>
    <dbReference type="NCBI Taxonomy" id="344609"/>
    <lineage>
        <taxon>Bacteria</taxon>
        <taxon>Pseudomonadati</taxon>
        <taxon>Pseudomonadota</taxon>
        <taxon>Gammaproteobacteria</taxon>
        <taxon>Enterobacterales</taxon>
        <taxon>Enterobacteriaceae</taxon>
        <taxon>Shigella</taxon>
    </lineage>
</organism>
<proteinExistence type="inferred from homology"/>
<dbReference type="EMBL" id="CP001063">
    <property type="protein sequence ID" value="ACD07188.1"/>
    <property type="molecule type" value="Genomic_DNA"/>
</dbReference>
<dbReference type="SMR" id="B2TV26"/>
<dbReference type="STRING" id="344609.SbBS512_E0731"/>
<dbReference type="MEROPS" id="I11.001"/>
<dbReference type="KEGG" id="sbc:SbBS512_E0731"/>
<dbReference type="HOGENOM" id="CLU_111565_0_0_6"/>
<dbReference type="Proteomes" id="UP000001030">
    <property type="component" value="Chromosome"/>
</dbReference>
<dbReference type="GO" id="GO:0042597">
    <property type="term" value="C:periplasmic space"/>
    <property type="evidence" value="ECO:0007669"/>
    <property type="project" value="UniProtKB-SubCell"/>
</dbReference>
<dbReference type="GO" id="GO:0004867">
    <property type="term" value="F:serine-type endopeptidase inhibitor activity"/>
    <property type="evidence" value="ECO:0007669"/>
    <property type="project" value="UniProtKB-UniRule"/>
</dbReference>
<dbReference type="CDD" id="cd00242">
    <property type="entry name" value="Ecotin"/>
    <property type="match status" value="1"/>
</dbReference>
<dbReference type="FunFam" id="2.60.40.550:FF:000001">
    <property type="entry name" value="Ecotin"/>
    <property type="match status" value="1"/>
</dbReference>
<dbReference type="FunFam" id="4.10.1230.10:FF:000001">
    <property type="entry name" value="Ecotin"/>
    <property type="match status" value="1"/>
</dbReference>
<dbReference type="Gene3D" id="2.60.40.550">
    <property type="entry name" value="Ecotin"/>
    <property type="match status" value="1"/>
</dbReference>
<dbReference type="Gene3D" id="4.10.1230.10">
    <property type="entry name" value="Ecotin, trypsin inhibitor"/>
    <property type="match status" value="1"/>
</dbReference>
<dbReference type="HAMAP" id="MF_00706">
    <property type="entry name" value="Ecotin"/>
    <property type="match status" value="1"/>
</dbReference>
<dbReference type="InterPro" id="IPR027438">
    <property type="entry name" value="Ecotin_C"/>
</dbReference>
<dbReference type="InterPro" id="IPR036198">
    <property type="entry name" value="Ecotin_sf"/>
</dbReference>
<dbReference type="InterPro" id="IPR005658">
    <property type="entry name" value="Prot_inh_ecotin"/>
</dbReference>
<dbReference type="InterPro" id="IPR023084">
    <property type="entry name" value="Prot_inh_ecotin_gammaproteobac"/>
</dbReference>
<dbReference type="NCBIfam" id="NF002987">
    <property type="entry name" value="PRK03719.1"/>
    <property type="match status" value="1"/>
</dbReference>
<dbReference type="PANTHER" id="PTHR35890">
    <property type="match status" value="1"/>
</dbReference>
<dbReference type="PANTHER" id="PTHR35890:SF3">
    <property type="entry name" value="ECOTIN"/>
    <property type="match status" value="1"/>
</dbReference>
<dbReference type="Pfam" id="PF03974">
    <property type="entry name" value="Ecotin"/>
    <property type="match status" value="1"/>
</dbReference>
<dbReference type="PIRSF" id="PIRSF006865">
    <property type="entry name" value="Prot_inh_ecotin"/>
    <property type="match status" value="1"/>
</dbReference>
<dbReference type="SUPFAM" id="SSF49772">
    <property type="entry name" value="Ecotin, trypsin inhibitor"/>
    <property type="match status" value="1"/>
</dbReference>
<evidence type="ECO:0000255" key="1">
    <source>
        <dbReference type="HAMAP-Rule" id="MF_00706"/>
    </source>
</evidence>
<gene>
    <name evidence="1" type="primary">eco</name>
    <name type="ordered locus">SbBS512_E0731</name>
</gene>
<sequence>MKTILPAVLFAAFATTSAWAAESVQPLEKIAPYPQAEKGMKRQVIQLTPQEDESTLKVELLIGQTLEVDCNLHRLGGKLESKTLEGWGYDYYVFDKVSSPVSTMMACPDGKKEKKFVTAYLGDAGMLRYNSKLPIVVYTPDNVDVKYRVWKAEEKIDNAEVR</sequence>
<reference key="1">
    <citation type="submission" date="2008-05" db="EMBL/GenBank/DDBJ databases">
        <title>Complete sequence of Shigella boydii serotype 18 strain BS512.</title>
        <authorList>
            <person name="Rasko D.A."/>
            <person name="Rosovitz M."/>
            <person name="Maurelli A.T."/>
            <person name="Myers G."/>
            <person name="Seshadri R."/>
            <person name="Cer R."/>
            <person name="Jiang L."/>
            <person name="Ravel J."/>
            <person name="Sebastian Y."/>
        </authorList>
    </citation>
    <scope>NUCLEOTIDE SEQUENCE [LARGE SCALE GENOMIC DNA]</scope>
    <source>
        <strain>CDC 3083-94 / BS512</strain>
    </source>
</reference>
<comment type="function">
    <text evidence="1">General inhibitor of pancreatic serine proteases: inhibits chymotrypsin, trypsin, elastases, factor X, kallikrein as well as a variety of other proteases.</text>
</comment>
<comment type="subunit">
    <text evidence="1">Homodimer.</text>
</comment>
<comment type="subcellular location">
    <subcellularLocation>
        <location evidence="1">Periplasm</location>
    </subcellularLocation>
</comment>
<comment type="similarity">
    <text evidence="1">Belongs to the protease inhibitor I11 (ecotin) family.</text>
</comment>
<protein>
    <recommendedName>
        <fullName evidence="1">Ecotin</fullName>
    </recommendedName>
</protein>
<feature type="signal peptide" evidence="1">
    <location>
        <begin position="1"/>
        <end position="20"/>
    </location>
</feature>
<feature type="chain" id="PRO_1000132366" description="Ecotin">
    <location>
        <begin position="21"/>
        <end position="162"/>
    </location>
</feature>
<feature type="site" description="Reactive bond" evidence="1">
    <location>
        <begin position="104"/>
        <end position="105"/>
    </location>
</feature>
<feature type="disulfide bond" evidence="1">
    <location>
        <begin position="70"/>
        <end position="107"/>
    </location>
</feature>
<keyword id="KW-1015">Disulfide bond</keyword>
<keyword id="KW-0574">Periplasm</keyword>
<keyword id="KW-0646">Protease inhibitor</keyword>
<keyword id="KW-1185">Reference proteome</keyword>
<keyword id="KW-0722">Serine protease inhibitor</keyword>
<keyword id="KW-0732">Signal</keyword>